<name>RSMA_ANASK</name>
<gene>
    <name evidence="1" type="primary">rsmA</name>
    <name evidence="1" type="synonym">ksgA</name>
    <name type="ordered locus">AnaeK_3743</name>
</gene>
<feature type="chain" id="PRO_1000130239" description="Ribosomal RNA small subunit methyltransferase A">
    <location>
        <begin position="1"/>
        <end position="284"/>
    </location>
</feature>
<feature type="binding site" evidence="1">
    <location>
        <position position="26"/>
    </location>
    <ligand>
        <name>S-adenosyl-L-methionine</name>
        <dbReference type="ChEBI" id="CHEBI:59789"/>
    </ligand>
</feature>
<feature type="binding site" evidence="1">
    <location>
        <position position="28"/>
    </location>
    <ligand>
        <name>S-adenosyl-L-methionine</name>
        <dbReference type="ChEBI" id="CHEBI:59789"/>
    </ligand>
</feature>
<feature type="binding site" evidence="1">
    <location>
        <position position="53"/>
    </location>
    <ligand>
        <name>S-adenosyl-L-methionine</name>
        <dbReference type="ChEBI" id="CHEBI:59789"/>
    </ligand>
</feature>
<feature type="binding site" evidence="1">
    <location>
        <position position="74"/>
    </location>
    <ligand>
        <name>S-adenosyl-L-methionine</name>
        <dbReference type="ChEBI" id="CHEBI:59789"/>
    </ligand>
</feature>
<feature type="binding site" evidence="1">
    <location>
        <position position="97"/>
    </location>
    <ligand>
        <name>S-adenosyl-L-methionine</name>
        <dbReference type="ChEBI" id="CHEBI:59789"/>
    </ligand>
</feature>
<feature type="binding site" evidence="1">
    <location>
        <position position="127"/>
    </location>
    <ligand>
        <name>S-adenosyl-L-methionine</name>
        <dbReference type="ChEBI" id="CHEBI:59789"/>
    </ligand>
</feature>
<reference key="1">
    <citation type="submission" date="2008-08" db="EMBL/GenBank/DDBJ databases">
        <title>Complete sequence of Anaeromyxobacter sp. K.</title>
        <authorList>
            <consortium name="US DOE Joint Genome Institute"/>
            <person name="Lucas S."/>
            <person name="Copeland A."/>
            <person name="Lapidus A."/>
            <person name="Glavina del Rio T."/>
            <person name="Dalin E."/>
            <person name="Tice H."/>
            <person name="Bruce D."/>
            <person name="Goodwin L."/>
            <person name="Pitluck S."/>
            <person name="Saunders E."/>
            <person name="Brettin T."/>
            <person name="Detter J.C."/>
            <person name="Han C."/>
            <person name="Larimer F."/>
            <person name="Land M."/>
            <person name="Hauser L."/>
            <person name="Kyrpides N."/>
            <person name="Ovchinnikiva G."/>
            <person name="Beliaev A."/>
        </authorList>
    </citation>
    <scope>NUCLEOTIDE SEQUENCE [LARGE SCALE GENOMIC DNA]</scope>
    <source>
        <strain>K</strain>
    </source>
</reference>
<comment type="function">
    <text evidence="1">Specifically dimethylates two adjacent adenosines (A1518 and A1519) in the loop of a conserved hairpin near the 3'-end of 16S rRNA in the 30S particle. May play a critical role in biogenesis of 30S subunits.</text>
</comment>
<comment type="catalytic activity">
    <reaction evidence="1">
        <text>adenosine(1518)/adenosine(1519) in 16S rRNA + 4 S-adenosyl-L-methionine = N(6)-dimethyladenosine(1518)/N(6)-dimethyladenosine(1519) in 16S rRNA + 4 S-adenosyl-L-homocysteine + 4 H(+)</text>
        <dbReference type="Rhea" id="RHEA:19609"/>
        <dbReference type="Rhea" id="RHEA-COMP:10232"/>
        <dbReference type="Rhea" id="RHEA-COMP:10233"/>
        <dbReference type="ChEBI" id="CHEBI:15378"/>
        <dbReference type="ChEBI" id="CHEBI:57856"/>
        <dbReference type="ChEBI" id="CHEBI:59789"/>
        <dbReference type="ChEBI" id="CHEBI:74411"/>
        <dbReference type="ChEBI" id="CHEBI:74493"/>
        <dbReference type="EC" id="2.1.1.182"/>
    </reaction>
</comment>
<comment type="subcellular location">
    <subcellularLocation>
        <location evidence="1">Cytoplasm</location>
    </subcellularLocation>
</comment>
<comment type="similarity">
    <text evidence="1">Belongs to the class I-like SAM-binding methyltransferase superfamily. rRNA adenine N(6)-methyltransferase family. RsmA subfamily.</text>
</comment>
<proteinExistence type="inferred from homology"/>
<accession>B4UDZ6</accession>
<evidence type="ECO:0000255" key="1">
    <source>
        <dbReference type="HAMAP-Rule" id="MF_00607"/>
    </source>
</evidence>
<dbReference type="EC" id="2.1.1.182" evidence="1"/>
<dbReference type="EMBL" id="CP001131">
    <property type="protein sequence ID" value="ACG74954.1"/>
    <property type="molecule type" value="Genomic_DNA"/>
</dbReference>
<dbReference type="RefSeq" id="WP_012527718.1">
    <property type="nucleotide sequence ID" value="NC_011145.1"/>
</dbReference>
<dbReference type="SMR" id="B4UDZ6"/>
<dbReference type="KEGG" id="ank:AnaeK_3743"/>
<dbReference type="HOGENOM" id="CLU_041220_0_1_7"/>
<dbReference type="OrthoDB" id="9814755at2"/>
<dbReference type="Proteomes" id="UP000001871">
    <property type="component" value="Chromosome"/>
</dbReference>
<dbReference type="GO" id="GO:0005829">
    <property type="term" value="C:cytosol"/>
    <property type="evidence" value="ECO:0007669"/>
    <property type="project" value="TreeGrafter"/>
</dbReference>
<dbReference type="GO" id="GO:0052908">
    <property type="term" value="F:16S rRNA (adenine(1518)-N(6)/adenine(1519)-N(6))-dimethyltransferase activity"/>
    <property type="evidence" value="ECO:0007669"/>
    <property type="project" value="UniProtKB-EC"/>
</dbReference>
<dbReference type="GO" id="GO:0003723">
    <property type="term" value="F:RNA binding"/>
    <property type="evidence" value="ECO:0007669"/>
    <property type="project" value="UniProtKB-KW"/>
</dbReference>
<dbReference type="CDD" id="cd02440">
    <property type="entry name" value="AdoMet_MTases"/>
    <property type="match status" value="1"/>
</dbReference>
<dbReference type="Gene3D" id="1.10.8.100">
    <property type="entry name" value="Ribosomal RNA adenine dimethylase-like, domain 2"/>
    <property type="match status" value="1"/>
</dbReference>
<dbReference type="Gene3D" id="3.40.50.150">
    <property type="entry name" value="Vaccinia Virus protein VP39"/>
    <property type="match status" value="1"/>
</dbReference>
<dbReference type="HAMAP" id="MF_00607">
    <property type="entry name" value="16SrRNA_methyltr_A"/>
    <property type="match status" value="1"/>
</dbReference>
<dbReference type="InterPro" id="IPR001737">
    <property type="entry name" value="KsgA/Erm"/>
</dbReference>
<dbReference type="InterPro" id="IPR023165">
    <property type="entry name" value="rRNA_Ade_diMease-like_C"/>
</dbReference>
<dbReference type="InterPro" id="IPR020596">
    <property type="entry name" value="rRNA_Ade_Mease_Trfase_CS"/>
</dbReference>
<dbReference type="InterPro" id="IPR020598">
    <property type="entry name" value="rRNA_Ade_methylase_Trfase_N"/>
</dbReference>
<dbReference type="InterPro" id="IPR011530">
    <property type="entry name" value="rRNA_adenine_dimethylase"/>
</dbReference>
<dbReference type="InterPro" id="IPR029063">
    <property type="entry name" value="SAM-dependent_MTases_sf"/>
</dbReference>
<dbReference type="NCBIfam" id="TIGR00755">
    <property type="entry name" value="ksgA"/>
    <property type="match status" value="1"/>
</dbReference>
<dbReference type="PANTHER" id="PTHR11727">
    <property type="entry name" value="DIMETHYLADENOSINE TRANSFERASE"/>
    <property type="match status" value="1"/>
</dbReference>
<dbReference type="PANTHER" id="PTHR11727:SF7">
    <property type="entry name" value="DIMETHYLADENOSINE TRANSFERASE-RELATED"/>
    <property type="match status" value="1"/>
</dbReference>
<dbReference type="Pfam" id="PF00398">
    <property type="entry name" value="RrnaAD"/>
    <property type="match status" value="1"/>
</dbReference>
<dbReference type="SMART" id="SM00650">
    <property type="entry name" value="rADc"/>
    <property type="match status" value="1"/>
</dbReference>
<dbReference type="SUPFAM" id="SSF53335">
    <property type="entry name" value="S-adenosyl-L-methionine-dependent methyltransferases"/>
    <property type="match status" value="1"/>
</dbReference>
<dbReference type="PROSITE" id="PS01131">
    <property type="entry name" value="RRNA_A_DIMETH"/>
    <property type="match status" value="1"/>
</dbReference>
<dbReference type="PROSITE" id="PS51689">
    <property type="entry name" value="SAM_RNA_A_N6_MT"/>
    <property type="match status" value="1"/>
</dbReference>
<protein>
    <recommendedName>
        <fullName evidence="1">Ribosomal RNA small subunit methyltransferase A</fullName>
        <ecNumber evidence="1">2.1.1.182</ecNumber>
    </recommendedName>
    <alternativeName>
        <fullName evidence="1">16S rRNA (adenine(1518)-N(6)/adenine(1519)-N(6))-dimethyltransferase</fullName>
    </alternativeName>
    <alternativeName>
        <fullName evidence="1">16S rRNA dimethyladenosine transferase</fullName>
    </alternativeName>
    <alternativeName>
        <fullName evidence="1">16S rRNA dimethylase</fullName>
    </alternativeName>
    <alternativeName>
        <fullName evidence="1">S-adenosylmethionine-6-N', N'-adenosyl(rRNA) dimethyltransferase</fullName>
    </alternativeName>
</protein>
<organism>
    <name type="scientific">Anaeromyxobacter sp. (strain K)</name>
    <dbReference type="NCBI Taxonomy" id="447217"/>
    <lineage>
        <taxon>Bacteria</taxon>
        <taxon>Pseudomonadati</taxon>
        <taxon>Myxococcota</taxon>
        <taxon>Myxococcia</taxon>
        <taxon>Myxococcales</taxon>
        <taxon>Cystobacterineae</taxon>
        <taxon>Anaeromyxobacteraceae</taxon>
        <taxon>Anaeromyxobacter</taxon>
    </lineage>
</organism>
<keyword id="KW-0963">Cytoplasm</keyword>
<keyword id="KW-0489">Methyltransferase</keyword>
<keyword id="KW-0694">RNA-binding</keyword>
<keyword id="KW-0698">rRNA processing</keyword>
<keyword id="KW-0949">S-adenosyl-L-methionine</keyword>
<keyword id="KW-0808">Transferase</keyword>
<sequence>MTDHYPSPRALLDRYDLRAKKSWGQNFLGDEAVLDDIARLAAPRAGDAVLELGAGLGHLTARLLARGARVAAVERDRDMVRVLRGELGDRITLLEADAARLDYADLAARFGAAAAAGEGPRLAVVGNLPYHLTSPILFSILDQVAHVSRAVFLLQREVAERLAAPPASRDWGVLSVLLQREADVSVERIVPPGAFWPPPKVASAVLCALFRPPADAVADPARFRRLVKAGFGQRRKTLRNALGSAKLADPARLEAAFAAAGVDPGRRGETLTLAEWAALERTLG</sequence>